<keyword id="KW-0963">Cytoplasm</keyword>
<keyword id="KW-0255">Endonuclease</keyword>
<keyword id="KW-0378">Hydrolase</keyword>
<keyword id="KW-0460">Magnesium</keyword>
<keyword id="KW-0479">Metal-binding</keyword>
<keyword id="KW-0540">Nuclease</keyword>
<name>RNH3_BACAA</name>
<feature type="chain" id="PRO_1000117698" description="Ribonuclease HIII">
    <location>
        <begin position="1"/>
        <end position="311"/>
    </location>
</feature>
<feature type="domain" description="RNase H type-2" evidence="2">
    <location>
        <begin position="95"/>
        <end position="311"/>
    </location>
</feature>
<feature type="binding site" evidence="1">
    <location>
        <position position="101"/>
    </location>
    <ligand>
        <name>a divalent metal cation</name>
        <dbReference type="ChEBI" id="CHEBI:60240"/>
    </ligand>
</feature>
<feature type="binding site" evidence="1">
    <location>
        <position position="102"/>
    </location>
    <ligand>
        <name>a divalent metal cation</name>
        <dbReference type="ChEBI" id="CHEBI:60240"/>
    </ligand>
</feature>
<feature type="binding site" evidence="1">
    <location>
        <position position="206"/>
    </location>
    <ligand>
        <name>a divalent metal cation</name>
        <dbReference type="ChEBI" id="CHEBI:60240"/>
    </ligand>
</feature>
<evidence type="ECO:0000255" key="1">
    <source>
        <dbReference type="HAMAP-Rule" id="MF_00053"/>
    </source>
</evidence>
<evidence type="ECO:0000255" key="2">
    <source>
        <dbReference type="PROSITE-ProRule" id="PRU01319"/>
    </source>
</evidence>
<accession>C3PAE4</accession>
<proteinExistence type="inferred from homology"/>
<protein>
    <recommendedName>
        <fullName evidence="1">Ribonuclease HIII</fullName>
        <shortName evidence="1">RNase HIII</shortName>
        <ecNumber evidence="1">3.1.26.4</ecNumber>
    </recommendedName>
</protein>
<reference key="1">
    <citation type="submission" date="2009-04" db="EMBL/GenBank/DDBJ databases">
        <title>Genome sequence of Bacillus anthracis A0248.</title>
        <authorList>
            <person name="Dodson R.J."/>
            <person name="Munk A.C."/>
            <person name="Bruce D."/>
            <person name="Detter C."/>
            <person name="Tapia R."/>
            <person name="Sutton G."/>
            <person name="Sims D."/>
            <person name="Brettin T."/>
        </authorList>
    </citation>
    <scope>NUCLEOTIDE SEQUENCE [LARGE SCALE GENOMIC DNA]</scope>
    <source>
        <strain>A0248</strain>
    </source>
</reference>
<organism>
    <name type="scientific">Bacillus anthracis (strain A0248)</name>
    <dbReference type="NCBI Taxonomy" id="592021"/>
    <lineage>
        <taxon>Bacteria</taxon>
        <taxon>Bacillati</taxon>
        <taxon>Bacillota</taxon>
        <taxon>Bacilli</taxon>
        <taxon>Bacillales</taxon>
        <taxon>Bacillaceae</taxon>
        <taxon>Bacillus</taxon>
        <taxon>Bacillus cereus group</taxon>
    </lineage>
</organism>
<sequence length="311" mass="34247">MSNSIVIQTNSTVIEDMKQQYKHSLSPKTPQGGIFMAKVPSCTITAYKSGKVMFQGGRAEAEAARWQTVPQTPKIAVKKSVDSHRYAPPASIGTMSIVGSDEVGTGDFFGPMTVVAVYVDAKQIPLLKELGVKDSKNLNDEQITAIAKQLLHVVPYSSLVLHNEKYNELFDKGNNQGKLKALLHNKAITNLLAKIAPTKPEGVLIDQFTQPDTYYKYLAKQKQVQRENVYFATKGESVHLAVAAASILARYSFVKQFNELSKKAGMPLPKGAGKQVDIAAAKLIQKLGKERLPEFVKLHFANTEKAFRLLK</sequence>
<comment type="function">
    <text evidence="1">Endonuclease that specifically degrades the RNA of RNA-DNA hybrids.</text>
</comment>
<comment type="catalytic activity">
    <reaction evidence="1">
        <text>Endonucleolytic cleavage to 5'-phosphomonoester.</text>
        <dbReference type="EC" id="3.1.26.4"/>
    </reaction>
</comment>
<comment type="cofactor">
    <cofactor evidence="1">
        <name>Mn(2+)</name>
        <dbReference type="ChEBI" id="CHEBI:29035"/>
    </cofactor>
    <cofactor evidence="1">
        <name>Mg(2+)</name>
        <dbReference type="ChEBI" id="CHEBI:18420"/>
    </cofactor>
    <text evidence="1">Manganese or magnesium. Binds 1 divalent metal ion per monomer in the absence of substrate. May bind a second metal ion after substrate binding.</text>
</comment>
<comment type="subcellular location">
    <subcellularLocation>
        <location evidence="1">Cytoplasm</location>
    </subcellularLocation>
</comment>
<comment type="similarity">
    <text evidence="1">Belongs to the RNase HII family. RnhC subfamily.</text>
</comment>
<dbReference type="EC" id="3.1.26.4" evidence="1"/>
<dbReference type="EMBL" id="CP001598">
    <property type="protein sequence ID" value="ACQ47677.1"/>
    <property type="molecule type" value="Genomic_DNA"/>
</dbReference>
<dbReference type="RefSeq" id="WP_000071578.1">
    <property type="nucleotide sequence ID" value="NC_012659.1"/>
</dbReference>
<dbReference type="SMR" id="C3PAE4"/>
<dbReference type="GeneID" id="45024427"/>
<dbReference type="KEGG" id="bai:BAA_4809"/>
<dbReference type="HOGENOM" id="CLU_059546_1_0_9"/>
<dbReference type="GO" id="GO:0005737">
    <property type="term" value="C:cytoplasm"/>
    <property type="evidence" value="ECO:0007669"/>
    <property type="project" value="UniProtKB-SubCell"/>
</dbReference>
<dbReference type="GO" id="GO:0032299">
    <property type="term" value="C:ribonuclease H2 complex"/>
    <property type="evidence" value="ECO:0007669"/>
    <property type="project" value="TreeGrafter"/>
</dbReference>
<dbReference type="GO" id="GO:0000287">
    <property type="term" value="F:magnesium ion binding"/>
    <property type="evidence" value="ECO:0007669"/>
    <property type="project" value="UniProtKB-UniRule"/>
</dbReference>
<dbReference type="GO" id="GO:0003723">
    <property type="term" value="F:RNA binding"/>
    <property type="evidence" value="ECO:0007669"/>
    <property type="project" value="InterPro"/>
</dbReference>
<dbReference type="GO" id="GO:0004523">
    <property type="term" value="F:RNA-DNA hybrid ribonuclease activity"/>
    <property type="evidence" value="ECO:0007669"/>
    <property type="project" value="UniProtKB-UniRule"/>
</dbReference>
<dbReference type="GO" id="GO:0043137">
    <property type="term" value="P:DNA replication, removal of RNA primer"/>
    <property type="evidence" value="ECO:0007669"/>
    <property type="project" value="TreeGrafter"/>
</dbReference>
<dbReference type="GO" id="GO:0006298">
    <property type="term" value="P:mismatch repair"/>
    <property type="evidence" value="ECO:0007669"/>
    <property type="project" value="TreeGrafter"/>
</dbReference>
<dbReference type="CDD" id="cd06590">
    <property type="entry name" value="RNase_HII_bacteria_HIII_like"/>
    <property type="match status" value="1"/>
</dbReference>
<dbReference type="CDD" id="cd14796">
    <property type="entry name" value="RNAse_HIII_N"/>
    <property type="match status" value="1"/>
</dbReference>
<dbReference type="FunFam" id="3.30.310.10:FF:000016">
    <property type="entry name" value="Ribonuclease HIII"/>
    <property type="match status" value="1"/>
</dbReference>
<dbReference type="FunFam" id="3.30.420.10:FF:000047">
    <property type="entry name" value="Ribonuclease HIII"/>
    <property type="match status" value="1"/>
</dbReference>
<dbReference type="Gene3D" id="3.30.420.10">
    <property type="entry name" value="Ribonuclease H-like superfamily/Ribonuclease H"/>
    <property type="match status" value="1"/>
</dbReference>
<dbReference type="Gene3D" id="3.30.310.10">
    <property type="entry name" value="TATA-Binding Protein"/>
    <property type="match status" value="1"/>
</dbReference>
<dbReference type="HAMAP" id="MF_00053">
    <property type="entry name" value="RNase_HIII"/>
    <property type="match status" value="1"/>
</dbReference>
<dbReference type="InterPro" id="IPR001352">
    <property type="entry name" value="RNase_HII/HIII"/>
</dbReference>
<dbReference type="InterPro" id="IPR024567">
    <property type="entry name" value="RNase_HII/HIII_dom"/>
</dbReference>
<dbReference type="InterPro" id="IPR004641">
    <property type="entry name" value="RNase_HIII"/>
</dbReference>
<dbReference type="InterPro" id="IPR024568">
    <property type="entry name" value="RNase_HIII_N"/>
</dbReference>
<dbReference type="InterPro" id="IPR012337">
    <property type="entry name" value="RNaseH-like_sf"/>
</dbReference>
<dbReference type="InterPro" id="IPR036397">
    <property type="entry name" value="RNaseH_sf"/>
</dbReference>
<dbReference type="InterPro" id="IPR012295">
    <property type="entry name" value="TBP_dom_sf"/>
</dbReference>
<dbReference type="NCBIfam" id="TIGR00716">
    <property type="entry name" value="rnhC"/>
    <property type="match status" value="1"/>
</dbReference>
<dbReference type="PANTHER" id="PTHR10954:SF23">
    <property type="entry name" value="RIBONUCLEASE"/>
    <property type="match status" value="1"/>
</dbReference>
<dbReference type="PANTHER" id="PTHR10954">
    <property type="entry name" value="RIBONUCLEASE H2 SUBUNIT A"/>
    <property type="match status" value="1"/>
</dbReference>
<dbReference type="Pfam" id="PF11858">
    <property type="entry name" value="DUF3378"/>
    <property type="match status" value="1"/>
</dbReference>
<dbReference type="Pfam" id="PF01351">
    <property type="entry name" value="RNase_HII"/>
    <property type="match status" value="1"/>
</dbReference>
<dbReference type="PIRSF" id="PIRSF037748">
    <property type="entry name" value="RnhC"/>
    <property type="match status" value="1"/>
</dbReference>
<dbReference type="SUPFAM" id="SSF53098">
    <property type="entry name" value="Ribonuclease H-like"/>
    <property type="match status" value="1"/>
</dbReference>
<dbReference type="PROSITE" id="PS51975">
    <property type="entry name" value="RNASE_H_2"/>
    <property type="match status" value="1"/>
</dbReference>
<gene>
    <name evidence="1" type="primary">rnhC</name>
    <name type="ordered locus">BAA_4809</name>
</gene>